<organism>
    <name type="scientific">Staphylococcus aureus (strain MRSA252)</name>
    <dbReference type="NCBI Taxonomy" id="282458"/>
    <lineage>
        <taxon>Bacteria</taxon>
        <taxon>Bacillati</taxon>
        <taxon>Bacillota</taxon>
        <taxon>Bacilli</taxon>
        <taxon>Bacillales</taxon>
        <taxon>Staphylococcaceae</taxon>
        <taxon>Staphylococcus</taxon>
    </lineage>
</organism>
<gene>
    <name evidence="1" type="primary">mraZ</name>
    <name type="ordered locus">SAR1154</name>
</gene>
<comment type="subunit">
    <text evidence="1">Forms oligomers.</text>
</comment>
<comment type="subcellular location">
    <subcellularLocation>
        <location evidence="1">Cytoplasm</location>
        <location evidence="1">Nucleoid</location>
    </subcellularLocation>
</comment>
<comment type="similarity">
    <text evidence="1">Belongs to the MraZ family.</text>
</comment>
<dbReference type="EMBL" id="BX571856">
    <property type="protein sequence ID" value="CAG40156.1"/>
    <property type="molecule type" value="Genomic_DNA"/>
</dbReference>
<dbReference type="RefSeq" id="WP_000480800.1">
    <property type="nucleotide sequence ID" value="NC_002952.2"/>
</dbReference>
<dbReference type="SMR" id="Q6GHQ7"/>
<dbReference type="GeneID" id="66839371"/>
<dbReference type="KEGG" id="sar:SAR1154"/>
<dbReference type="HOGENOM" id="CLU_107907_0_5_9"/>
<dbReference type="Proteomes" id="UP000000596">
    <property type="component" value="Chromosome"/>
</dbReference>
<dbReference type="GO" id="GO:0005737">
    <property type="term" value="C:cytoplasm"/>
    <property type="evidence" value="ECO:0007669"/>
    <property type="project" value="UniProtKB-UniRule"/>
</dbReference>
<dbReference type="GO" id="GO:0009295">
    <property type="term" value="C:nucleoid"/>
    <property type="evidence" value="ECO:0007669"/>
    <property type="project" value="UniProtKB-SubCell"/>
</dbReference>
<dbReference type="GO" id="GO:0003700">
    <property type="term" value="F:DNA-binding transcription factor activity"/>
    <property type="evidence" value="ECO:0007669"/>
    <property type="project" value="UniProtKB-UniRule"/>
</dbReference>
<dbReference type="GO" id="GO:0000976">
    <property type="term" value="F:transcription cis-regulatory region binding"/>
    <property type="evidence" value="ECO:0007669"/>
    <property type="project" value="TreeGrafter"/>
</dbReference>
<dbReference type="GO" id="GO:2000143">
    <property type="term" value="P:negative regulation of DNA-templated transcription initiation"/>
    <property type="evidence" value="ECO:0007669"/>
    <property type="project" value="TreeGrafter"/>
</dbReference>
<dbReference type="CDD" id="cd16321">
    <property type="entry name" value="MraZ_C"/>
    <property type="match status" value="1"/>
</dbReference>
<dbReference type="CDD" id="cd16320">
    <property type="entry name" value="MraZ_N"/>
    <property type="match status" value="1"/>
</dbReference>
<dbReference type="FunFam" id="3.40.1550.20:FF:000002">
    <property type="entry name" value="Transcriptional regulator MraZ"/>
    <property type="match status" value="1"/>
</dbReference>
<dbReference type="Gene3D" id="3.40.1550.20">
    <property type="entry name" value="Transcriptional regulator MraZ domain"/>
    <property type="match status" value="1"/>
</dbReference>
<dbReference type="HAMAP" id="MF_01008">
    <property type="entry name" value="MraZ"/>
    <property type="match status" value="1"/>
</dbReference>
<dbReference type="InterPro" id="IPR003444">
    <property type="entry name" value="MraZ"/>
</dbReference>
<dbReference type="InterPro" id="IPR035644">
    <property type="entry name" value="MraZ_C"/>
</dbReference>
<dbReference type="InterPro" id="IPR020603">
    <property type="entry name" value="MraZ_dom"/>
</dbReference>
<dbReference type="InterPro" id="IPR035642">
    <property type="entry name" value="MraZ_N"/>
</dbReference>
<dbReference type="InterPro" id="IPR038619">
    <property type="entry name" value="MraZ_sf"/>
</dbReference>
<dbReference type="InterPro" id="IPR007159">
    <property type="entry name" value="SpoVT-AbrB_dom"/>
</dbReference>
<dbReference type="InterPro" id="IPR037914">
    <property type="entry name" value="SpoVT-AbrB_sf"/>
</dbReference>
<dbReference type="NCBIfam" id="TIGR00242">
    <property type="entry name" value="division/cell wall cluster transcriptional repressor MraZ"/>
    <property type="match status" value="1"/>
</dbReference>
<dbReference type="PANTHER" id="PTHR34701">
    <property type="entry name" value="TRANSCRIPTIONAL REGULATOR MRAZ"/>
    <property type="match status" value="1"/>
</dbReference>
<dbReference type="PANTHER" id="PTHR34701:SF1">
    <property type="entry name" value="TRANSCRIPTIONAL REGULATOR MRAZ"/>
    <property type="match status" value="1"/>
</dbReference>
<dbReference type="Pfam" id="PF02381">
    <property type="entry name" value="MraZ"/>
    <property type="match status" value="2"/>
</dbReference>
<dbReference type="SUPFAM" id="SSF89447">
    <property type="entry name" value="AbrB/MazE/MraZ-like"/>
    <property type="match status" value="1"/>
</dbReference>
<dbReference type="PROSITE" id="PS51740">
    <property type="entry name" value="SPOVT_ABRB"/>
    <property type="match status" value="2"/>
</dbReference>
<sequence length="143" mass="17238">MFMGEYDHQLDTKGRMIIPSKFRYDLNERFIITRGLDKCLFGYTLDEWQQIEEKMKTLPMTKKDARKFMRMFFSGAVEVELDKQGRINIPQNLRKYANLTKECTVIGVSNRIEIWDRETWNDFYEESEESFEDIAEDLIDFDF</sequence>
<name>MRAZ_STAAR</name>
<protein>
    <recommendedName>
        <fullName>Transcriptional regulator MraZ</fullName>
    </recommendedName>
</protein>
<accession>Q6GHQ7</accession>
<evidence type="ECO:0000255" key="1">
    <source>
        <dbReference type="HAMAP-Rule" id="MF_01008"/>
    </source>
</evidence>
<evidence type="ECO:0000255" key="2">
    <source>
        <dbReference type="PROSITE-ProRule" id="PRU01076"/>
    </source>
</evidence>
<proteinExistence type="inferred from homology"/>
<feature type="chain" id="PRO_0000108541" description="Transcriptional regulator MraZ">
    <location>
        <begin position="1"/>
        <end position="143"/>
    </location>
</feature>
<feature type="domain" description="SpoVT-AbrB 1" evidence="2">
    <location>
        <begin position="5"/>
        <end position="47"/>
    </location>
</feature>
<feature type="domain" description="SpoVT-AbrB 2" evidence="2">
    <location>
        <begin position="76"/>
        <end position="119"/>
    </location>
</feature>
<keyword id="KW-0963">Cytoplasm</keyword>
<keyword id="KW-0238">DNA-binding</keyword>
<keyword id="KW-0677">Repeat</keyword>
<keyword id="KW-0804">Transcription</keyword>
<keyword id="KW-0805">Transcription regulation</keyword>
<reference key="1">
    <citation type="journal article" date="2004" name="Proc. Natl. Acad. Sci. U.S.A.">
        <title>Complete genomes of two clinical Staphylococcus aureus strains: evidence for the rapid evolution of virulence and drug resistance.</title>
        <authorList>
            <person name="Holden M.T.G."/>
            <person name="Feil E.J."/>
            <person name="Lindsay J.A."/>
            <person name="Peacock S.J."/>
            <person name="Day N.P.J."/>
            <person name="Enright M.C."/>
            <person name="Foster T.J."/>
            <person name="Moore C.E."/>
            <person name="Hurst L."/>
            <person name="Atkin R."/>
            <person name="Barron A."/>
            <person name="Bason N."/>
            <person name="Bentley S.D."/>
            <person name="Chillingworth C."/>
            <person name="Chillingworth T."/>
            <person name="Churcher C."/>
            <person name="Clark L."/>
            <person name="Corton C."/>
            <person name="Cronin A."/>
            <person name="Doggett J."/>
            <person name="Dowd L."/>
            <person name="Feltwell T."/>
            <person name="Hance Z."/>
            <person name="Harris B."/>
            <person name="Hauser H."/>
            <person name="Holroyd S."/>
            <person name="Jagels K."/>
            <person name="James K.D."/>
            <person name="Lennard N."/>
            <person name="Line A."/>
            <person name="Mayes R."/>
            <person name="Moule S."/>
            <person name="Mungall K."/>
            <person name="Ormond D."/>
            <person name="Quail M.A."/>
            <person name="Rabbinowitsch E."/>
            <person name="Rutherford K.M."/>
            <person name="Sanders M."/>
            <person name="Sharp S."/>
            <person name="Simmonds M."/>
            <person name="Stevens K."/>
            <person name="Whitehead S."/>
            <person name="Barrell B.G."/>
            <person name="Spratt B.G."/>
            <person name="Parkhill J."/>
        </authorList>
    </citation>
    <scope>NUCLEOTIDE SEQUENCE [LARGE SCALE GENOMIC DNA]</scope>
    <source>
        <strain>MRSA252</strain>
    </source>
</reference>